<name>TRUA2_DESPS</name>
<organism>
    <name type="scientific">Desulfotalea psychrophila (strain LSv54 / DSM 12343)</name>
    <dbReference type="NCBI Taxonomy" id="177439"/>
    <lineage>
        <taxon>Bacteria</taxon>
        <taxon>Pseudomonadati</taxon>
        <taxon>Thermodesulfobacteriota</taxon>
        <taxon>Desulfobulbia</taxon>
        <taxon>Desulfobulbales</taxon>
        <taxon>Desulfocapsaceae</taxon>
        <taxon>Desulfotalea</taxon>
    </lineage>
</organism>
<gene>
    <name evidence="1" type="primary">truA2</name>
    <name type="ordered locus">DP2356</name>
</gene>
<evidence type="ECO:0000255" key="1">
    <source>
        <dbReference type="HAMAP-Rule" id="MF_00171"/>
    </source>
</evidence>
<sequence length="261" mass="29428">MNYFRVKIAYKGTHYFGWQAQSIDTLHEEKPTVEGTILNALKKITNYQPCTVSGASRTDGGVHARGQIAKITISQKISPEHLLLGLNSLLPTDIRILECVPSTKEYQASRGSVSKEYHYYFIASPVDNVATSDIALHLPIDSIGPDDLALLRSACRLFVGRHDFYNFSSRGSGTSFREIFYCDIHRANFSPLANDMFYLKIIGDGFLKYMIRYIMGALLELVRGRIVLDDISLYLQQHQEDKLSPRAKAKGLHLIRIEGPK</sequence>
<proteinExistence type="inferred from homology"/>
<feature type="chain" id="PRO_0000057373" description="tRNA pseudouridine synthase A 2">
    <location>
        <begin position="1"/>
        <end position="261"/>
    </location>
</feature>
<feature type="active site" description="Nucleophile" evidence="1">
    <location>
        <position position="59"/>
    </location>
</feature>
<feature type="binding site" evidence="1">
    <location>
        <position position="117"/>
    </location>
    <ligand>
        <name>substrate</name>
    </ligand>
</feature>
<dbReference type="EC" id="5.4.99.12" evidence="1"/>
<dbReference type="EMBL" id="CR522870">
    <property type="protein sequence ID" value="CAG37085.1"/>
    <property type="molecule type" value="Genomic_DNA"/>
</dbReference>
<dbReference type="RefSeq" id="WP_011189597.1">
    <property type="nucleotide sequence ID" value="NC_006138.1"/>
</dbReference>
<dbReference type="SMR" id="Q6AKP0"/>
<dbReference type="STRING" id="177439.DP2356"/>
<dbReference type="KEGG" id="dps:DP2356"/>
<dbReference type="eggNOG" id="COG0101">
    <property type="taxonomic scope" value="Bacteria"/>
</dbReference>
<dbReference type="HOGENOM" id="CLU_014673_0_1_7"/>
<dbReference type="OrthoDB" id="9811823at2"/>
<dbReference type="Proteomes" id="UP000000602">
    <property type="component" value="Chromosome"/>
</dbReference>
<dbReference type="GO" id="GO:0003723">
    <property type="term" value="F:RNA binding"/>
    <property type="evidence" value="ECO:0007669"/>
    <property type="project" value="InterPro"/>
</dbReference>
<dbReference type="GO" id="GO:0160147">
    <property type="term" value="F:tRNA pseudouridine(38-40) synthase activity"/>
    <property type="evidence" value="ECO:0007669"/>
    <property type="project" value="UniProtKB-EC"/>
</dbReference>
<dbReference type="GO" id="GO:0031119">
    <property type="term" value="P:tRNA pseudouridine synthesis"/>
    <property type="evidence" value="ECO:0007669"/>
    <property type="project" value="UniProtKB-UniRule"/>
</dbReference>
<dbReference type="CDD" id="cd02570">
    <property type="entry name" value="PseudoU_synth_EcTruA"/>
    <property type="match status" value="1"/>
</dbReference>
<dbReference type="Gene3D" id="3.30.70.660">
    <property type="entry name" value="Pseudouridine synthase I, catalytic domain, C-terminal subdomain"/>
    <property type="match status" value="1"/>
</dbReference>
<dbReference type="Gene3D" id="3.30.70.580">
    <property type="entry name" value="Pseudouridine synthase I, catalytic domain, N-terminal subdomain"/>
    <property type="match status" value="1"/>
</dbReference>
<dbReference type="HAMAP" id="MF_00171">
    <property type="entry name" value="TruA"/>
    <property type="match status" value="1"/>
</dbReference>
<dbReference type="InterPro" id="IPR020103">
    <property type="entry name" value="PsdUridine_synth_cat_dom_sf"/>
</dbReference>
<dbReference type="InterPro" id="IPR001406">
    <property type="entry name" value="PsdUridine_synth_TruA"/>
</dbReference>
<dbReference type="InterPro" id="IPR020097">
    <property type="entry name" value="PsdUridine_synth_TruA_a/b_dom"/>
</dbReference>
<dbReference type="InterPro" id="IPR020095">
    <property type="entry name" value="PsdUridine_synth_TruA_C"/>
</dbReference>
<dbReference type="InterPro" id="IPR020094">
    <property type="entry name" value="TruA/RsuA/RluB/E/F_N"/>
</dbReference>
<dbReference type="NCBIfam" id="TIGR00071">
    <property type="entry name" value="hisT_truA"/>
    <property type="match status" value="1"/>
</dbReference>
<dbReference type="PANTHER" id="PTHR11142">
    <property type="entry name" value="PSEUDOURIDYLATE SYNTHASE"/>
    <property type="match status" value="1"/>
</dbReference>
<dbReference type="PANTHER" id="PTHR11142:SF0">
    <property type="entry name" value="TRNA PSEUDOURIDINE SYNTHASE-LIKE 1"/>
    <property type="match status" value="1"/>
</dbReference>
<dbReference type="Pfam" id="PF01416">
    <property type="entry name" value="PseudoU_synth_1"/>
    <property type="match status" value="2"/>
</dbReference>
<dbReference type="PIRSF" id="PIRSF001430">
    <property type="entry name" value="tRNA_psdUrid_synth"/>
    <property type="match status" value="1"/>
</dbReference>
<dbReference type="SUPFAM" id="SSF55120">
    <property type="entry name" value="Pseudouridine synthase"/>
    <property type="match status" value="1"/>
</dbReference>
<accession>Q6AKP0</accession>
<comment type="function">
    <text evidence="1">Formation of pseudouridine at positions 38, 39 and 40 in the anticodon stem and loop of transfer RNAs.</text>
</comment>
<comment type="catalytic activity">
    <reaction evidence="1">
        <text>uridine(38/39/40) in tRNA = pseudouridine(38/39/40) in tRNA</text>
        <dbReference type="Rhea" id="RHEA:22376"/>
        <dbReference type="Rhea" id="RHEA-COMP:10085"/>
        <dbReference type="Rhea" id="RHEA-COMP:10087"/>
        <dbReference type="ChEBI" id="CHEBI:65314"/>
        <dbReference type="ChEBI" id="CHEBI:65315"/>
        <dbReference type="EC" id="5.4.99.12"/>
    </reaction>
</comment>
<comment type="subunit">
    <text evidence="1">Homodimer.</text>
</comment>
<comment type="similarity">
    <text evidence="1">Belongs to the tRNA pseudouridine synthase TruA family.</text>
</comment>
<reference key="1">
    <citation type="journal article" date="2004" name="Environ. Microbiol.">
        <title>The genome of Desulfotalea psychrophila, a sulfate-reducing bacterium from permanently cold Arctic sediments.</title>
        <authorList>
            <person name="Rabus R."/>
            <person name="Ruepp A."/>
            <person name="Frickey T."/>
            <person name="Rattei T."/>
            <person name="Fartmann B."/>
            <person name="Stark M."/>
            <person name="Bauer M."/>
            <person name="Zibat A."/>
            <person name="Lombardot T."/>
            <person name="Becker I."/>
            <person name="Amann J."/>
            <person name="Gellner K."/>
            <person name="Teeling H."/>
            <person name="Leuschner W.D."/>
            <person name="Gloeckner F.-O."/>
            <person name="Lupas A.N."/>
            <person name="Amann R."/>
            <person name="Klenk H.-P."/>
        </authorList>
    </citation>
    <scope>NUCLEOTIDE SEQUENCE [LARGE SCALE GENOMIC DNA]</scope>
    <source>
        <strain>DSM 12343 / LSv54</strain>
    </source>
</reference>
<protein>
    <recommendedName>
        <fullName evidence="1">tRNA pseudouridine synthase A 2</fullName>
        <ecNumber evidence="1">5.4.99.12</ecNumber>
    </recommendedName>
    <alternativeName>
        <fullName evidence="1">tRNA pseudouridine(38-40) synthase</fullName>
    </alternativeName>
    <alternativeName>
        <fullName evidence="1">tRNA pseudouridylate synthase I 2</fullName>
    </alternativeName>
    <alternativeName>
        <fullName evidence="1">tRNA-uridine isomerase I 2</fullName>
    </alternativeName>
</protein>
<keyword id="KW-0413">Isomerase</keyword>
<keyword id="KW-1185">Reference proteome</keyword>
<keyword id="KW-0819">tRNA processing</keyword>